<evidence type="ECO:0000250" key="1"/>
<evidence type="ECO:0000255" key="2"/>
<evidence type="ECO:0000256" key="3">
    <source>
        <dbReference type="SAM" id="MobiDB-lite"/>
    </source>
</evidence>
<evidence type="ECO:0000305" key="4"/>
<evidence type="ECO:0000312" key="5">
    <source>
        <dbReference type="MGI" id="MGI:1914314"/>
    </source>
</evidence>
<keyword id="KW-0131">Cell cycle</keyword>
<keyword id="KW-0132">Cell division</keyword>
<keyword id="KW-0175">Coiled coil</keyword>
<keyword id="KW-0963">Cytoplasm</keyword>
<keyword id="KW-0903">Direct protein sequencing</keyword>
<keyword id="KW-0967">Endosome</keyword>
<keyword id="KW-0472">Membrane</keyword>
<keyword id="KW-0653">Protein transport</keyword>
<keyword id="KW-1185">Reference proteome</keyword>
<keyword id="KW-0813">Transport</keyword>
<dbReference type="EMBL" id="AK014091">
    <property type="protein sequence ID" value="BAB29150.2"/>
    <property type="molecule type" value="mRNA"/>
</dbReference>
<dbReference type="EMBL" id="AK151071">
    <property type="protein sequence ID" value="BAE30087.1"/>
    <property type="molecule type" value="mRNA"/>
</dbReference>
<dbReference type="EMBL" id="CT010307">
    <property type="protein sequence ID" value="CAJ18515.1"/>
    <property type="molecule type" value="mRNA"/>
</dbReference>
<dbReference type="EMBL" id="BC002229">
    <property type="protein sequence ID" value="AAH02229.1"/>
    <property type="molecule type" value="mRNA"/>
</dbReference>
<dbReference type="CCDS" id="CCDS84391.1"/>
<dbReference type="RefSeq" id="NP_077152.1">
    <property type="nucleotide sequence ID" value="NM_024190.2"/>
</dbReference>
<dbReference type="SMR" id="Q99LU0"/>
<dbReference type="BioGRID" id="211913">
    <property type="interactions" value="3"/>
</dbReference>
<dbReference type="ComplexPortal" id="CPX-332">
    <property type="entry name" value="ESCRT-III complex, variant Chmp1b1"/>
</dbReference>
<dbReference type="FunCoup" id="Q99LU0">
    <property type="interactions" value="1505"/>
</dbReference>
<dbReference type="IntAct" id="Q99LU0">
    <property type="interactions" value="1"/>
</dbReference>
<dbReference type="STRING" id="10090.ENSMUSP00000147285"/>
<dbReference type="iPTMnet" id="Q99LU0"/>
<dbReference type="PhosphoSitePlus" id="Q99LU0"/>
<dbReference type="jPOST" id="Q99LU0"/>
<dbReference type="ProteomicsDB" id="281600"/>
<dbReference type="Pumba" id="Q99LU0"/>
<dbReference type="Antibodypedia" id="54046">
    <property type="antibodies" value="114 antibodies from 24 providers"/>
</dbReference>
<dbReference type="DNASU" id="67064"/>
<dbReference type="Ensembl" id="ENSMUST00000210564.3">
    <property type="protein sequence ID" value="ENSMUSP00000147285.2"/>
    <property type="gene ID" value="ENSMUSG00000109901.3"/>
</dbReference>
<dbReference type="GeneID" id="67064"/>
<dbReference type="KEGG" id="mmu:67064"/>
<dbReference type="UCSC" id="uc008flu.2">
    <property type="organism name" value="mouse"/>
</dbReference>
<dbReference type="AGR" id="MGI:1914314"/>
<dbReference type="CTD" id="57132"/>
<dbReference type="MGI" id="MGI:1914314">
    <property type="gene designation" value="Chmp1b"/>
</dbReference>
<dbReference type="VEuPathDB" id="HostDB:ENSMUSG00000109901"/>
<dbReference type="GeneTree" id="ENSGT00950000182832"/>
<dbReference type="InParanoid" id="Q99LU0"/>
<dbReference type="OMA" id="LMDKFKH"/>
<dbReference type="OrthoDB" id="10266568at2759"/>
<dbReference type="PhylomeDB" id="Q99LU0"/>
<dbReference type="BioGRID-ORCS" id="67064">
    <property type="hits" value="0 hits in 20 CRISPR screens"/>
</dbReference>
<dbReference type="PRO" id="PR:Q99LU0"/>
<dbReference type="Proteomes" id="UP000000589">
    <property type="component" value="Chromosome 18"/>
</dbReference>
<dbReference type="RNAct" id="Q99LU0">
    <property type="molecule type" value="protein"/>
</dbReference>
<dbReference type="Bgee" id="ENSMUSG00000109901">
    <property type="expression patterns" value="Expressed in urinary bladder urothelium and 247 other cell types or tissues"/>
</dbReference>
<dbReference type="GO" id="GO:1904930">
    <property type="term" value="C:amphisome membrane"/>
    <property type="evidence" value="ECO:0000266"/>
    <property type="project" value="ComplexPortal"/>
</dbReference>
<dbReference type="GO" id="GO:0000421">
    <property type="term" value="C:autophagosome membrane"/>
    <property type="evidence" value="ECO:0000266"/>
    <property type="project" value="ComplexPortal"/>
</dbReference>
<dbReference type="GO" id="GO:0005829">
    <property type="term" value="C:cytosol"/>
    <property type="evidence" value="ECO:0007669"/>
    <property type="project" value="UniProtKB-SubCell"/>
</dbReference>
<dbReference type="GO" id="GO:0000815">
    <property type="term" value="C:ESCRT III complex"/>
    <property type="evidence" value="ECO:0007669"/>
    <property type="project" value="Ensembl"/>
</dbReference>
<dbReference type="GO" id="GO:0000776">
    <property type="term" value="C:kinetochore"/>
    <property type="evidence" value="ECO:0000266"/>
    <property type="project" value="ComplexPortal"/>
</dbReference>
<dbReference type="GO" id="GO:0005828">
    <property type="term" value="C:kinetochore microtubule"/>
    <property type="evidence" value="ECO:0000266"/>
    <property type="project" value="ComplexPortal"/>
</dbReference>
<dbReference type="GO" id="GO:0005765">
    <property type="term" value="C:lysosomal membrane"/>
    <property type="evidence" value="ECO:0000266"/>
    <property type="project" value="ComplexPortal"/>
</dbReference>
<dbReference type="GO" id="GO:0030117">
    <property type="term" value="C:membrane coat"/>
    <property type="evidence" value="ECO:0007669"/>
    <property type="project" value="Ensembl"/>
</dbReference>
<dbReference type="GO" id="GO:0030496">
    <property type="term" value="C:midbody"/>
    <property type="evidence" value="ECO:0000266"/>
    <property type="project" value="ComplexPortal"/>
</dbReference>
<dbReference type="GO" id="GO:0032585">
    <property type="term" value="C:multivesicular body membrane"/>
    <property type="evidence" value="ECO:0000266"/>
    <property type="project" value="ComplexPortal"/>
</dbReference>
<dbReference type="GO" id="GO:0005643">
    <property type="term" value="C:nuclear pore"/>
    <property type="evidence" value="ECO:0000266"/>
    <property type="project" value="ComplexPortal"/>
</dbReference>
<dbReference type="GO" id="GO:0005654">
    <property type="term" value="C:nucleoplasm"/>
    <property type="evidence" value="ECO:0007669"/>
    <property type="project" value="Ensembl"/>
</dbReference>
<dbReference type="GO" id="GO:0005886">
    <property type="term" value="C:plasma membrane"/>
    <property type="evidence" value="ECO:0000266"/>
    <property type="project" value="ComplexPortal"/>
</dbReference>
<dbReference type="GO" id="GO:0042802">
    <property type="term" value="F:identical protein binding"/>
    <property type="evidence" value="ECO:0007669"/>
    <property type="project" value="Ensembl"/>
</dbReference>
<dbReference type="GO" id="GO:0090541">
    <property type="term" value="F:MIT domain binding"/>
    <property type="evidence" value="ECO:0007669"/>
    <property type="project" value="Ensembl"/>
</dbReference>
<dbReference type="GO" id="GO:0097352">
    <property type="term" value="P:autophagosome maturation"/>
    <property type="evidence" value="ECO:0000266"/>
    <property type="project" value="ComplexPortal"/>
</dbReference>
<dbReference type="GO" id="GO:0006914">
    <property type="term" value="P:autophagy"/>
    <property type="evidence" value="ECO:0000266"/>
    <property type="project" value="ComplexPortal"/>
</dbReference>
<dbReference type="GO" id="GO:1902774">
    <property type="term" value="P:late endosome to lysosome transport"/>
    <property type="evidence" value="ECO:0000266"/>
    <property type="project" value="ComplexPortal"/>
</dbReference>
<dbReference type="GO" id="GO:0090148">
    <property type="term" value="P:membrane fission"/>
    <property type="evidence" value="ECO:0000303"/>
    <property type="project" value="ComplexPortal"/>
</dbReference>
<dbReference type="GO" id="GO:0061952">
    <property type="term" value="P:midbody abscission"/>
    <property type="evidence" value="ECO:0000266"/>
    <property type="project" value="ComplexPortal"/>
</dbReference>
<dbReference type="GO" id="GO:0007080">
    <property type="term" value="P:mitotic metaphase chromosome alignment"/>
    <property type="evidence" value="ECO:0000266"/>
    <property type="project" value="ComplexPortal"/>
</dbReference>
<dbReference type="GO" id="GO:0036258">
    <property type="term" value="P:multivesicular body assembly"/>
    <property type="evidence" value="ECO:0000303"/>
    <property type="project" value="ComplexPortal"/>
</dbReference>
<dbReference type="GO" id="GO:0071985">
    <property type="term" value="P:multivesicular body sorting pathway"/>
    <property type="evidence" value="ECO:0000266"/>
    <property type="project" value="ComplexPortal"/>
</dbReference>
<dbReference type="GO" id="GO:0061763">
    <property type="term" value="P:multivesicular body-lysosome fusion"/>
    <property type="evidence" value="ECO:0000303"/>
    <property type="project" value="ComplexPortal"/>
</dbReference>
<dbReference type="GO" id="GO:0031468">
    <property type="term" value="P:nuclear membrane reassembly"/>
    <property type="evidence" value="ECO:0000266"/>
    <property type="project" value="ComplexPortal"/>
</dbReference>
<dbReference type="GO" id="GO:0006997">
    <property type="term" value="P:nucleus organization"/>
    <property type="evidence" value="ECO:0000266"/>
    <property type="project" value="ComplexPortal"/>
</dbReference>
<dbReference type="GO" id="GO:0001778">
    <property type="term" value="P:plasma membrane repair"/>
    <property type="evidence" value="ECO:0000266"/>
    <property type="project" value="ComplexPortal"/>
</dbReference>
<dbReference type="GO" id="GO:0015031">
    <property type="term" value="P:protein transport"/>
    <property type="evidence" value="ECO:0007669"/>
    <property type="project" value="UniProtKB-KW"/>
</dbReference>
<dbReference type="GO" id="GO:0010824">
    <property type="term" value="P:regulation of centrosome duplication"/>
    <property type="evidence" value="ECO:0007669"/>
    <property type="project" value="Ensembl"/>
</dbReference>
<dbReference type="GO" id="GO:1901673">
    <property type="term" value="P:regulation of mitotic spindle assembly"/>
    <property type="evidence" value="ECO:0000266"/>
    <property type="project" value="ComplexPortal"/>
</dbReference>
<dbReference type="GO" id="GO:0043162">
    <property type="term" value="P:ubiquitin-dependent protein catabolic process via the multivesicular body sorting pathway"/>
    <property type="evidence" value="ECO:0000266"/>
    <property type="project" value="ComplexPortal"/>
</dbReference>
<dbReference type="GO" id="GO:0051469">
    <property type="term" value="P:vesicle fusion with vacuole"/>
    <property type="evidence" value="ECO:0000303"/>
    <property type="project" value="ComplexPortal"/>
</dbReference>
<dbReference type="GO" id="GO:0046761">
    <property type="term" value="P:viral budding from plasma membrane"/>
    <property type="evidence" value="ECO:0000266"/>
    <property type="project" value="ComplexPortal"/>
</dbReference>
<dbReference type="GO" id="GO:0039702">
    <property type="term" value="P:viral budding via host ESCRT complex"/>
    <property type="evidence" value="ECO:0000266"/>
    <property type="project" value="ComplexPortal"/>
</dbReference>
<dbReference type="Gene3D" id="6.10.140.1230">
    <property type="match status" value="1"/>
</dbReference>
<dbReference type="InterPro" id="IPR005024">
    <property type="entry name" value="Snf7_fam"/>
</dbReference>
<dbReference type="PANTHER" id="PTHR10476">
    <property type="entry name" value="CHARGED MULTIVESICULAR BODY PROTEIN"/>
    <property type="match status" value="1"/>
</dbReference>
<dbReference type="Pfam" id="PF03357">
    <property type="entry name" value="Snf7"/>
    <property type="match status" value="1"/>
</dbReference>
<protein>
    <recommendedName>
        <fullName evidence="5">Charged multivesicular body protein 1B1</fullName>
    </recommendedName>
    <alternativeName>
        <fullName>Chromatin-modifying protein 1b-1</fullName>
        <shortName>CHMP1b-1</shortName>
    </alternativeName>
</protein>
<name>CH1B1_MOUSE</name>
<organism>
    <name type="scientific">Mus musculus</name>
    <name type="common">Mouse</name>
    <dbReference type="NCBI Taxonomy" id="10090"/>
    <lineage>
        <taxon>Eukaryota</taxon>
        <taxon>Metazoa</taxon>
        <taxon>Chordata</taxon>
        <taxon>Craniata</taxon>
        <taxon>Vertebrata</taxon>
        <taxon>Euteleostomi</taxon>
        <taxon>Mammalia</taxon>
        <taxon>Eutheria</taxon>
        <taxon>Euarchontoglires</taxon>
        <taxon>Glires</taxon>
        <taxon>Rodentia</taxon>
        <taxon>Myomorpha</taxon>
        <taxon>Muroidea</taxon>
        <taxon>Muridae</taxon>
        <taxon>Murinae</taxon>
        <taxon>Mus</taxon>
        <taxon>Mus</taxon>
    </lineage>
</organism>
<proteinExistence type="evidence at protein level"/>
<reference key="1">
    <citation type="journal article" date="2005" name="Science">
        <title>The transcriptional landscape of the mammalian genome.</title>
        <authorList>
            <person name="Carninci P."/>
            <person name="Kasukawa T."/>
            <person name="Katayama S."/>
            <person name="Gough J."/>
            <person name="Frith M.C."/>
            <person name="Maeda N."/>
            <person name="Oyama R."/>
            <person name="Ravasi T."/>
            <person name="Lenhard B."/>
            <person name="Wells C."/>
            <person name="Kodzius R."/>
            <person name="Shimokawa K."/>
            <person name="Bajic V.B."/>
            <person name="Brenner S.E."/>
            <person name="Batalov S."/>
            <person name="Forrest A.R."/>
            <person name="Zavolan M."/>
            <person name="Davis M.J."/>
            <person name="Wilming L.G."/>
            <person name="Aidinis V."/>
            <person name="Allen J.E."/>
            <person name="Ambesi-Impiombato A."/>
            <person name="Apweiler R."/>
            <person name="Aturaliya R.N."/>
            <person name="Bailey T.L."/>
            <person name="Bansal M."/>
            <person name="Baxter L."/>
            <person name="Beisel K.W."/>
            <person name="Bersano T."/>
            <person name="Bono H."/>
            <person name="Chalk A.M."/>
            <person name="Chiu K.P."/>
            <person name="Choudhary V."/>
            <person name="Christoffels A."/>
            <person name="Clutterbuck D.R."/>
            <person name="Crowe M.L."/>
            <person name="Dalla E."/>
            <person name="Dalrymple B.P."/>
            <person name="de Bono B."/>
            <person name="Della Gatta G."/>
            <person name="di Bernardo D."/>
            <person name="Down T."/>
            <person name="Engstrom P."/>
            <person name="Fagiolini M."/>
            <person name="Faulkner G."/>
            <person name="Fletcher C.F."/>
            <person name="Fukushima T."/>
            <person name="Furuno M."/>
            <person name="Futaki S."/>
            <person name="Gariboldi M."/>
            <person name="Georgii-Hemming P."/>
            <person name="Gingeras T.R."/>
            <person name="Gojobori T."/>
            <person name="Green R.E."/>
            <person name="Gustincich S."/>
            <person name="Harbers M."/>
            <person name="Hayashi Y."/>
            <person name="Hensch T.K."/>
            <person name="Hirokawa N."/>
            <person name="Hill D."/>
            <person name="Huminiecki L."/>
            <person name="Iacono M."/>
            <person name="Ikeo K."/>
            <person name="Iwama A."/>
            <person name="Ishikawa T."/>
            <person name="Jakt M."/>
            <person name="Kanapin A."/>
            <person name="Katoh M."/>
            <person name="Kawasawa Y."/>
            <person name="Kelso J."/>
            <person name="Kitamura H."/>
            <person name="Kitano H."/>
            <person name="Kollias G."/>
            <person name="Krishnan S.P."/>
            <person name="Kruger A."/>
            <person name="Kummerfeld S.K."/>
            <person name="Kurochkin I.V."/>
            <person name="Lareau L.F."/>
            <person name="Lazarevic D."/>
            <person name="Lipovich L."/>
            <person name="Liu J."/>
            <person name="Liuni S."/>
            <person name="McWilliam S."/>
            <person name="Madan Babu M."/>
            <person name="Madera M."/>
            <person name="Marchionni L."/>
            <person name="Matsuda H."/>
            <person name="Matsuzawa S."/>
            <person name="Miki H."/>
            <person name="Mignone F."/>
            <person name="Miyake S."/>
            <person name="Morris K."/>
            <person name="Mottagui-Tabar S."/>
            <person name="Mulder N."/>
            <person name="Nakano N."/>
            <person name="Nakauchi H."/>
            <person name="Ng P."/>
            <person name="Nilsson R."/>
            <person name="Nishiguchi S."/>
            <person name="Nishikawa S."/>
            <person name="Nori F."/>
            <person name="Ohara O."/>
            <person name="Okazaki Y."/>
            <person name="Orlando V."/>
            <person name="Pang K.C."/>
            <person name="Pavan W.J."/>
            <person name="Pavesi G."/>
            <person name="Pesole G."/>
            <person name="Petrovsky N."/>
            <person name="Piazza S."/>
            <person name="Reed J."/>
            <person name="Reid J.F."/>
            <person name="Ring B.Z."/>
            <person name="Ringwald M."/>
            <person name="Rost B."/>
            <person name="Ruan Y."/>
            <person name="Salzberg S.L."/>
            <person name="Sandelin A."/>
            <person name="Schneider C."/>
            <person name="Schoenbach C."/>
            <person name="Sekiguchi K."/>
            <person name="Semple C.A."/>
            <person name="Seno S."/>
            <person name="Sessa L."/>
            <person name="Sheng Y."/>
            <person name="Shibata Y."/>
            <person name="Shimada H."/>
            <person name="Shimada K."/>
            <person name="Silva D."/>
            <person name="Sinclair B."/>
            <person name="Sperling S."/>
            <person name="Stupka E."/>
            <person name="Sugiura K."/>
            <person name="Sultana R."/>
            <person name="Takenaka Y."/>
            <person name="Taki K."/>
            <person name="Tammoja K."/>
            <person name="Tan S.L."/>
            <person name="Tang S."/>
            <person name="Taylor M.S."/>
            <person name="Tegner J."/>
            <person name="Teichmann S.A."/>
            <person name="Ueda H.R."/>
            <person name="van Nimwegen E."/>
            <person name="Verardo R."/>
            <person name="Wei C.L."/>
            <person name="Yagi K."/>
            <person name="Yamanishi H."/>
            <person name="Zabarovsky E."/>
            <person name="Zhu S."/>
            <person name="Zimmer A."/>
            <person name="Hide W."/>
            <person name="Bult C."/>
            <person name="Grimmond S.M."/>
            <person name="Teasdale R.D."/>
            <person name="Liu E.T."/>
            <person name="Brusic V."/>
            <person name="Quackenbush J."/>
            <person name="Wahlestedt C."/>
            <person name="Mattick J.S."/>
            <person name="Hume D.A."/>
            <person name="Kai C."/>
            <person name="Sasaki D."/>
            <person name="Tomaru Y."/>
            <person name="Fukuda S."/>
            <person name="Kanamori-Katayama M."/>
            <person name="Suzuki M."/>
            <person name="Aoki J."/>
            <person name="Arakawa T."/>
            <person name="Iida J."/>
            <person name="Imamura K."/>
            <person name="Itoh M."/>
            <person name="Kato T."/>
            <person name="Kawaji H."/>
            <person name="Kawagashira N."/>
            <person name="Kawashima T."/>
            <person name="Kojima M."/>
            <person name="Kondo S."/>
            <person name="Konno H."/>
            <person name="Nakano K."/>
            <person name="Ninomiya N."/>
            <person name="Nishio T."/>
            <person name="Okada M."/>
            <person name="Plessy C."/>
            <person name="Shibata K."/>
            <person name="Shiraki T."/>
            <person name="Suzuki S."/>
            <person name="Tagami M."/>
            <person name="Waki K."/>
            <person name="Watahiki A."/>
            <person name="Okamura-Oho Y."/>
            <person name="Suzuki H."/>
            <person name="Kawai J."/>
            <person name="Hayashizaki Y."/>
        </authorList>
    </citation>
    <scope>NUCLEOTIDE SEQUENCE [LARGE SCALE MRNA]</scope>
    <source>
        <strain>C57BL/6J</strain>
        <tissue>Bone marrow</tissue>
        <tissue>Head</tissue>
    </source>
</reference>
<reference key="2">
    <citation type="submission" date="2005-07" db="EMBL/GenBank/DDBJ databases">
        <title>Cloning of mouse full open reading frames in Gateway(R) system entry vector (pDONR201).</title>
        <authorList>
            <person name="Ebert L."/>
            <person name="Muenstermann E."/>
            <person name="Schatten R."/>
            <person name="Henze S."/>
            <person name="Bohn E."/>
            <person name="Mollenhauer J."/>
            <person name="Wiemann S."/>
            <person name="Schick M."/>
            <person name="Korn B."/>
        </authorList>
    </citation>
    <scope>NUCLEOTIDE SEQUENCE [LARGE SCALE MRNA]</scope>
</reference>
<reference key="3">
    <citation type="journal article" date="2004" name="Genome Res.">
        <title>The status, quality, and expansion of the NIH full-length cDNA project: the Mammalian Gene Collection (MGC).</title>
        <authorList>
            <consortium name="The MGC Project Team"/>
        </authorList>
    </citation>
    <scope>NUCLEOTIDE SEQUENCE [LARGE SCALE MRNA]</scope>
    <source>
        <strain>FVB/N</strain>
        <tissue>Mammary tumor</tissue>
    </source>
</reference>
<reference key="4">
    <citation type="submission" date="2007-04" db="UniProtKB">
        <authorList>
            <person name="Lubec G."/>
            <person name="Kang S.U."/>
        </authorList>
    </citation>
    <scope>PROTEIN SEQUENCE OF 105-110</scope>
    <scope>IDENTIFICATION BY MASS SPECTROMETRY</scope>
    <source>
        <strain>C57BL/6J</strain>
        <tissue>Brain</tissue>
    </source>
</reference>
<feature type="chain" id="PRO_0000211455" description="Charged multivesicular body protein 1B1">
    <location>
        <begin position="1"/>
        <end position="199"/>
    </location>
</feature>
<feature type="region of interest" description="Interaction with IST1" evidence="1">
    <location>
        <begin position="132"/>
        <end position="156"/>
    </location>
</feature>
<feature type="region of interest" description="Disordered" evidence="3">
    <location>
        <begin position="167"/>
        <end position="199"/>
    </location>
</feature>
<feature type="region of interest" description="Interaction with SPAST" evidence="1">
    <location>
        <begin position="174"/>
        <end position="199"/>
    </location>
</feature>
<feature type="region of interest" description="Interaction with VTA1" evidence="1">
    <location>
        <begin position="180"/>
        <end position="199"/>
    </location>
</feature>
<feature type="region of interest" description="Interaction with VPS4A, MITD1 and STAMBP" evidence="1">
    <location>
        <begin position="180"/>
        <end position="196"/>
    </location>
</feature>
<feature type="region of interest" description="Interaction with VPS4B" evidence="1">
    <location>
        <begin position="183"/>
        <end position="199"/>
    </location>
</feature>
<feature type="coiled-coil region" evidence="2">
    <location>
        <begin position="10"/>
        <end position="48"/>
    </location>
</feature>
<feature type="coiled-coil region" evidence="2">
    <location>
        <begin position="178"/>
        <end position="199"/>
    </location>
</feature>
<feature type="short sequence motif" description="MIT-interacting motif">
    <location>
        <begin position="186"/>
        <end position="196"/>
    </location>
</feature>
<feature type="compositionally biased region" description="Polar residues" evidence="3">
    <location>
        <begin position="170"/>
        <end position="182"/>
    </location>
</feature>
<feature type="sequence conflict" description="In Ref. 1; BAB29150." evidence="4" ref="1">
    <original>Q</original>
    <variation>A</variation>
    <location>
        <position position="185"/>
    </location>
</feature>
<gene>
    <name evidence="5" type="primary">Chmp1b1</name>
    <name type="synonym">Chmp1b</name>
</gene>
<comment type="function">
    <text evidence="1">Probable peripherally associated component of the endosomal sorting required for transport complex III (ESCRT-III) which is involved in multivesicular bodies (MVBs) formation and sorting of endosomal cargo proteins into MVBs. MVBs contain intraluminal vesicles (ILVs) that are generated by invagination and scission from the limiting membrane of the endosome and mostly are delivered to lysosomes enabling degradation of membrane proteins, such as stimulated growth factor receptors, lysosomal enzymes and lipids. The MVB pathway appears to require the sequential function of ESCRT-O, -I,-II and -III complexes. ESCRT-III proteins mostly dissociate from the invaginating membrane before the ILV is released. The ESCRT machinery also functions in topologically equivalent membrane fission events, such as the terminal stages of cytokinesis. ESCRT-III proteins are believed to mediate the necessary vesicle extrusion and/or membrane fission activities, possibly in conjunction with the AAA ATPase VPS4. Involved in cytokinesis. Involved in recruiting VPS4A and/or VPS4B and SPAST to the midbody of dividing cells (By similarity).</text>
</comment>
<comment type="subunit">
    <text evidence="1">Probable peripherally associated component of the endosomal sorting required for transport complex III (ESCRT-III). ESCRT-III components are thought to multimerize to form a flat lattice on the perimeter membrane of the endosome. Several assembly forms of ESCRT-III may exist that interact and act sequentially. Interacts with CHMP1A. Interacts with VTA1; the interaction probably involves the open conformation of CHMP1B. Interacts with CHMP2A. Interacts with VPS4A; the interaction is direct. Interacts with VPS4B; the interaction is direct. Interacts with SPAST (via MIT domain); the interaction is direct. Interacts with IST1. Interacts with MITD1. Interacts with STAMBP (By similarity).</text>
</comment>
<comment type="subcellular location">
    <subcellularLocation>
        <location evidence="1">Cytoplasm</location>
        <location evidence="1">Cytosol</location>
    </subcellularLocation>
    <subcellularLocation>
        <location evidence="1">Endosome</location>
    </subcellularLocation>
    <subcellularLocation>
        <location evidence="1">Late endosome membrane</location>
        <topology evidence="1">Peripheral membrane protein</topology>
    </subcellularLocation>
    <text evidence="1">Localizes to the midbody of dividing cells, colocalizing with CEP55 and CHMP5. Localized at the periphery of the Fleming body (By similarity).</text>
</comment>
<comment type="similarity">
    <text evidence="4">Belongs to the SNF7 family.</text>
</comment>
<sequence>MSNMEKHLFNLKFAAKELNRSSKKCDKEEKAEKAKIKKAIQKGNMEVARIHAENAIRQKNQGVNFLRMSARVDAVAARVQTAVTMGKVTKSMAGVVKSMDATLKSMNLEKISALMDKFEHQFETLDVQTQQMEDTMSSTTTLTTPQNQVDMLLQEMADEAGLDLNMELPQGQTGSVGTSVASAEQDELSQRLARLRDQV</sequence>
<accession>Q99LU0</accession>
<accession>Q3UB77</accession>
<accession>Q9CXR5</accession>